<name>VE2_HPV19</name>
<feature type="chain" id="PRO_0000133198" description="Regulatory protein E2">
    <location>
        <begin position="1"/>
        <end position="493"/>
    </location>
</feature>
<feature type="region of interest" description="Transactivation domain" evidence="1">
    <location>
        <begin position="1"/>
        <end position="201"/>
    </location>
</feature>
<feature type="region of interest" description="Disordered" evidence="2">
    <location>
        <begin position="196"/>
        <end position="395"/>
    </location>
</feature>
<feature type="region of interest" description="DNA-binding domain" evidence="1">
    <location>
        <begin position="409"/>
        <end position="493"/>
    </location>
</feature>
<feature type="compositionally biased region" description="Low complexity" evidence="2">
    <location>
        <begin position="215"/>
        <end position="228"/>
    </location>
</feature>
<feature type="compositionally biased region" description="Polar residues" evidence="2">
    <location>
        <begin position="229"/>
        <end position="244"/>
    </location>
</feature>
<feature type="compositionally biased region" description="Basic residues" evidence="2">
    <location>
        <begin position="245"/>
        <end position="280"/>
    </location>
</feature>
<feature type="compositionally biased region" description="Basic residues" evidence="2">
    <location>
        <begin position="287"/>
        <end position="304"/>
    </location>
</feature>
<feature type="compositionally biased region" description="Low complexity" evidence="2">
    <location>
        <begin position="315"/>
        <end position="336"/>
    </location>
</feature>
<feature type="compositionally biased region" description="Basic residues" evidence="2">
    <location>
        <begin position="337"/>
        <end position="355"/>
    </location>
</feature>
<protein>
    <recommendedName>
        <fullName evidence="1">Regulatory protein E2</fullName>
    </recommendedName>
</protein>
<evidence type="ECO:0000255" key="1">
    <source>
        <dbReference type="HAMAP-Rule" id="MF_04001"/>
    </source>
</evidence>
<evidence type="ECO:0000256" key="2">
    <source>
        <dbReference type="SAM" id="MobiDB-lite"/>
    </source>
</evidence>
<reference key="1">
    <citation type="journal article" date="1994" name="Curr. Top. Microbiol. Immunol.">
        <title>Primer-directed sequencing of human papillomavirus types.</title>
        <authorList>
            <person name="Delius H."/>
            <person name="Hofmann B."/>
        </authorList>
    </citation>
    <scope>NUCLEOTIDE SEQUENCE [GENOMIC DNA]</scope>
</reference>
<gene>
    <name evidence="1" type="primary">E2</name>
</gene>
<accession>P36786</accession>
<organism>
    <name type="scientific">Human papillomavirus 19</name>
    <dbReference type="NCBI Taxonomy" id="10608"/>
    <lineage>
        <taxon>Viruses</taxon>
        <taxon>Monodnaviria</taxon>
        <taxon>Shotokuvirae</taxon>
        <taxon>Cossaviricota</taxon>
        <taxon>Papovaviricetes</taxon>
        <taxon>Zurhausenvirales</taxon>
        <taxon>Papillomaviridae</taxon>
        <taxon>Firstpapillomavirinae</taxon>
        <taxon>Betapapillomavirus</taxon>
        <taxon>Betapapillomavirus 1</taxon>
    </lineage>
</organism>
<comment type="function">
    <text evidence="1">Plays a role in the initiation of viral DNA replication. A dimer of E2 interacts with a dimer of E1 in order to improve specificity of E1 DNA binding activity. Once the complex recognizes and binds DNA at specific sites, the E2 dimer is removed from DNA. E2 also regulates viral transcription through binding to the E2RE response element (5'-ACCNNNNNNGGT-3') present in multiple copies in the regulatory regions of the viral genome. Activates or represses transcription depending on E2RE's position with regards to proximal promoter elements including the TATA-box. Repression occurs by sterically hindering the assembly of the transcription initiation complex.</text>
</comment>
<comment type="subunit">
    <text evidence="1">Binds DNA as homodimer. Interacts with protein E1; this interaction greatly increases E1 DNA-binding activity. Interacts with protein L1; this interaction enhances E2-dependent replication and transcription activation. Interacts with protein L2; this interaction inhibits E2 transcriptional activity but not DNA replication function E2. Interacts with protein E7; this interaction inhibits E7 oncogenic activity. Interacts with host TAF1; this interaction modulates E2-dependent transcriptional regulation. Interacts with host BRD4; this interaction mediates E2 transcriptional activation function. Additionally, the interaction with host BRD4 on mitotic chromosomes mediates tethering of the viral genome. Interacts with host TOPBP1; this interaction is required for optimal viral DNA replication.</text>
</comment>
<comment type="subcellular location">
    <subcellularLocation>
        <location evidence="1">Host nucleus</location>
    </subcellularLocation>
</comment>
<comment type="PTM">
    <text evidence="1">Phosphorylated.</text>
</comment>
<comment type="similarity">
    <text evidence="1">Belongs to the papillomaviridae E2 protein family.</text>
</comment>
<organismHost>
    <name type="scientific">Homo sapiens</name>
    <name type="common">Human</name>
    <dbReference type="NCBI Taxonomy" id="9606"/>
</organismHost>
<proteinExistence type="inferred from homology"/>
<keyword id="KW-0010">Activator</keyword>
<keyword id="KW-0235">DNA replication</keyword>
<keyword id="KW-0238">DNA-binding</keyword>
<keyword id="KW-0244">Early protein</keyword>
<keyword id="KW-1048">Host nucleus</keyword>
<keyword id="KW-0597">Phosphoprotein</keyword>
<keyword id="KW-0678">Repressor</keyword>
<keyword id="KW-0804">Transcription</keyword>
<keyword id="KW-0805">Transcription regulation</keyword>
<dbReference type="EMBL" id="X74470">
    <property type="protein sequence ID" value="CAA52521.1"/>
    <property type="molecule type" value="Genomic_DNA"/>
</dbReference>
<dbReference type="PIR" id="S36488">
    <property type="entry name" value="S36488"/>
</dbReference>
<dbReference type="SMR" id="P36786"/>
<dbReference type="Proteomes" id="UP000009110">
    <property type="component" value="Genome"/>
</dbReference>
<dbReference type="GO" id="GO:0042025">
    <property type="term" value="C:host cell nucleus"/>
    <property type="evidence" value="ECO:0007669"/>
    <property type="project" value="UniProtKB-SubCell"/>
</dbReference>
<dbReference type="GO" id="GO:0003677">
    <property type="term" value="F:DNA binding"/>
    <property type="evidence" value="ECO:0007669"/>
    <property type="project" value="UniProtKB-UniRule"/>
</dbReference>
<dbReference type="GO" id="GO:0003700">
    <property type="term" value="F:DNA-binding transcription factor activity"/>
    <property type="evidence" value="ECO:0007669"/>
    <property type="project" value="UniProtKB-UniRule"/>
</dbReference>
<dbReference type="GO" id="GO:0000166">
    <property type="term" value="F:nucleotide binding"/>
    <property type="evidence" value="ECO:0007669"/>
    <property type="project" value="UniProtKB-UniRule"/>
</dbReference>
<dbReference type="GO" id="GO:0006260">
    <property type="term" value="P:DNA replication"/>
    <property type="evidence" value="ECO:0007669"/>
    <property type="project" value="UniProtKB-KW"/>
</dbReference>
<dbReference type="GO" id="GO:0006351">
    <property type="term" value="P:DNA-templated transcription"/>
    <property type="evidence" value="ECO:0007669"/>
    <property type="project" value="UniProtKB-UniRule"/>
</dbReference>
<dbReference type="GO" id="GO:0006275">
    <property type="term" value="P:regulation of DNA replication"/>
    <property type="evidence" value="ECO:0007669"/>
    <property type="project" value="UniProtKB-UniRule"/>
</dbReference>
<dbReference type="GO" id="GO:0039693">
    <property type="term" value="P:viral DNA genome replication"/>
    <property type="evidence" value="ECO:0007669"/>
    <property type="project" value="UniProtKB-UniRule"/>
</dbReference>
<dbReference type="Gene3D" id="3.30.70.330">
    <property type="match status" value="1"/>
</dbReference>
<dbReference type="Gene3D" id="1.10.287.30">
    <property type="entry name" value="E2 (early) protein, N terminal domain, subdomain 1"/>
    <property type="match status" value="1"/>
</dbReference>
<dbReference type="Gene3D" id="2.170.200.10">
    <property type="entry name" value="Papillomavirus E2 early protein domain"/>
    <property type="match status" value="1"/>
</dbReference>
<dbReference type="HAMAP" id="MF_04001">
    <property type="entry name" value="PPV_E2"/>
    <property type="match status" value="1"/>
</dbReference>
<dbReference type="InterPro" id="IPR035975">
    <property type="entry name" value="E2/EBNA1_C_sf"/>
</dbReference>
<dbReference type="InterPro" id="IPR012677">
    <property type="entry name" value="Nucleotide-bd_a/b_plait_sf"/>
</dbReference>
<dbReference type="InterPro" id="IPR000427">
    <property type="entry name" value="Papillomavirus_E2_C"/>
</dbReference>
<dbReference type="InterPro" id="IPR001866">
    <property type="entry name" value="PPV_E2_N"/>
</dbReference>
<dbReference type="InterPro" id="IPR033668">
    <property type="entry name" value="Reg_prot_E2"/>
</dbReference>
<dbReference type="InterPro" id="IPR036050">
    <property type="entry name" value="Regulatory_protein_E2_N"/>
</dbReference>
<dbReference type="InterPro" id="IPR042503">
    <property type="entry name" value="Regulatory_protein_E2_N_1"/>
</dbReference>
<dbReference type="InterPro" id="IPR042504">
    <property type="entry name" value="Regulatory_protein_E2_N_2"/>
</dbReference>
<dbReference type="Pfam" id="PF00511">
    <property type="entry name" value="PPV_E2_C"/>
    <property type="match status" value="1"/>
</dbReference>
<dbReference type="Pfam" id="PF00508">
    <property type="entry name" value="PPV_E2_N"/>
    <property type="match status" value="1"/>
</dbReference>
<dbReference type="SUPFAM" id="SSF51332">
    <property type="entry name" value="E2 regulatory, transactivation domain"/>
    <property type="match status" value="1"/>
</dbReference>
<dbReference type="SUPFAM" id="SSF54957">
    <property type="entry name" value="Viral DNA-binding domain"/>
    <property type="match status" value="1"/>
</dbReference>
<sequence>MENLSERFNVLQDQLMNIYESAAETLESQIEHWQILRKEAVLLYFARRKGVTRIGYQPVPTLAVSEAKAKEAIGMVLQLQSLQKSEYGTEPWSLVDTSAETYRSAPENYFKKGPMPIEVIYDKDADNANLYTMWKFVYYVDEDDNWHKSESGVNHTGLYFMQGNFRHYYVLFADDARKYSATGHWEVKVNKETVFTPVTSSTPPDSPGGQRDPNTSSKTPTTTTDSASRLSPTASREQSQQTNTKGRRYERRPSSRTRRQTQTRQKRSRSKSKSRSRSRSRSLSSNRRSRSKSRRKASTTRGRGRGSPTATSDQSSRSPSATSSTTSLRSRGSSRVGRSRGGRSRVGRSRGRGKRSRESPSPTNTKRSRRQSGSSRLHGVSADAVGTSVHTVSGRNTGRLGRLLEEALDPPVILVRGEPNTLRSFRNRAKHMYRGLFSSFSTAWSWVAGDGIERLGRTRMLISFVSFNQRKHFDDTVRYPKGVDRSFGSFDSL</sequence>